<comment type="function">
    <text evidence="1">The glycine cleavage system catalyzes the degradation of glycine. The H protein shuttles the methylamine group of glycine from the P protein to the T protein.</text>
</comment>
<comment type="cofactor">
    <cofactor evidence="1 3">
        <name>(R)-lipoate</name>
        <dbReference type="ChEBI" id="CHEBI:83088"/>
    </cofactor>
    <text evidence="1 3">Binds 1 lipoyl cofactor covalently.</text>
</comment>
<comment type="subunit">
    <text evidence="1 3">The glycine cleavage system is composed of four proteins: P, T, L and H (By similarity). Monomer.</text>
</comment>
<comment type="mass spectrometry" mass="14083.0" method="MALDI" evidence="3">
    <text>Unlipoylated protein.</text>
</comment>
<comment type="mass spectrometry" mass="14273.0" method="MALDI" evidence="3">
    <text>Lipoylated protein.</text>
</comment>
<comment type="similarity">
    <text evidence="1">Belongs to the GcvH family.</text>
</comment>
<protein>
    <recommendedName>
        <fullName evidence="1">Glycine cleavage system H protein</fullName>
    </recommendedName>
</protein>
<accession>Q5SKW9</accession>
<accession>P83697</accession>
<evidence type="ECO:0000255" key="1">
    <source>
        <dbReference type="HAMAP-Rule" id="MF_00272"/>
    </source>
</evidence>
<evidence type="ECO:0000255" key="2">
    <source>
        <dbReference type="PROSITE-ProRule" id="PRU01066"/>
    </source>
</evidence>
<evidence type="ECO:0000269" key="3">
    <source>
    </source>
</evidence>
<evidence type="ECO:0007829" key="4">
    <source>
        <dbReference type="PDB" id="1ONL"/>
    </source>
</evidence>
<dbReference type="EMBL" id="AP008226">
    <property type="protein sequence ID" value="BAD70347.1"/>
    <property type="molecule type" value="Genomic_DNA"/>
</dbReference>
<dbReference type="RefSeq" id="WP_011228002.1">
    <property type="nucleotide sequence ID" value="NC_006461.1"/>
</dbReference>
<dbReference type="RefSeq" id="YP_143790.1">
    <property type="nucleotide sequence ID" value="NC_006461.1"/>
</dbReference>
<dbReference type="PDB" id="1ONL">
    <property type="method" value="X-ray"/>
    <property type="resolution" value="2.50 A"/>
    <property type="chains" value="A/B/C=1-128"/>
</dbReference>
<dbReference type="PDBsum" id="1ONL"/>
<dbReference type="SMR" id="Q5SKW9"/>
<dbReference type="EnsemblBacteria" id="BAD70347">
    <property type="protein sequence ID" value="BAD70347"/>
    <property type="gene ID" value="BAD70347"/>
</dbReference>
<dbReference type="GeneID" id="3169107"/>
<dbReference type="KEGG" id="ttj:TTHA0524"/>
<dbReference type="PATRIC" id="fig|300852.9.peg.522"/>
<dbReference type="eggNOG" id="COG0509">
    <property type="taxonomic scope" value="Bacteria"/>
</dbReference>
<dbReference type="HOGENOM" id="CLU_097408_2_0_0"/>
<dbReference type="PhylomeDB" id="Q5SKW9"/>
<dbReference type="EvolutionaryTrace" id="Q5SKW9"/>
<dbReference type="Proteomes" id="UP000000532">
    <property type="component" value="Chromosome"/>
</dbReference>
<dbReference type="GO" id="GO:0005737">
    <property type="term" value="C:cytoplasm"/>
    <property type="evidence" value="ECO:0007669"/>
    <property type="project" value="TreeGrafter"/>
</dbReference>
<dbReference type="GO" id="GO:0005960">
    <property type="term" value="C:glycine cleavage complex"/>
    <property type="evidence" value="ECO:0007669"/>
    <property type="project" value="InterPro"/>
</dbReference>
<dbReference type="GO" id="GO:0019464">
    <property type="term" value="P:glycine decarboxylation via glycine cleavage system"/>
    <property type="evidence" value="ECO:0007669"/>
    <property type="project" value="UniProtKB-UniRule"/>
</dbReference>
<dbReference type="CDD" id="cd06848">
    <property type="entry name" value="GCS_H"/>
    <property type="match status" value="1"/>
</dbReference>
<dbReference type="Gene3D" id="2.40.50.100">
    <property type="match status" value="1"/>
</dbReference>
<dbReference type="HAMAP" id="MF_00272">
    <property type="entry name" value="GcvH"/>
    <property type="match status" value="1"/>
</dbReference>
<dbReference type="InterPro" id="IPR003016">
    <property type="entry name" value="2-oxoA_DH_lipoyl-BS"/>
</dbReference>
<dbReference type="InterPro" id="IPR000089">
    <property type="entry name" value="Biotin_lipoyl"/>
</dbReference>
<dbReference type="InterPro" id="IPR002930">
    <property type="entry name" value="GCV_H"/>
</dbReference>
<dbReference type="InterPro" id="IPR033753">
    <property type="entry name" value="GCV_H/Fam206"/>
</dbReference>
<dbReference type="InterPro" id="IPR017453">
    <property type="entry name" value="GCV_H_sub"/>
</dbReference>
<dbReference type="InterPro" id="IPR011053">
    <property type="entry name" value="Single_hybrid_motif"/>
</dbReference>
<dbReference type="NCBIfam" id="TIGR00527">
    <property type="entry name" value="gcvH"/>
    <property type="match status" value="1"/>
</dbReference>
<dbReference type="NCBIfam" id="NF002270">
    <property type="entry name" value="PRK01202.1"/>
    <property type="match status" value="1"/>
</dbReference>
<dbReference type="PANTHER" id="PTHR11715">
    <property type="entry name" value="GLYCINE CLEAVAGE SYSTEM H PROTEIN"/>
    <property type="match status" value="1"/>
</dbReference>
<dbReference type="PANTHER" id="PTHR11715:SF3">
    <property type="entry name" value="GLYCINE CLEAVAGE SYSTEM H PROTEIN-RELATED"/>
    <property type="match status" value="1"/>
</dbReference>
<dbReference type="Pfam" id="PF01597">
    <property type="entry name" value="GCV_H"/>
    <property type="match status" value="1"/>
</dbReference>
<dbReference type="SUPFAM" id="SSF51230">
    <property type="entry name" value="Single hybrid motif"/>
    <property type="match status" value="1"/>
</dbReference>
<dbReference type="PROSITE" id="PS50968">
    <property type="entry name" value="BIOTINYL_LIPOYL"/>
    <property type="match status" value="1"/>
</dbReference>
<dbReference type="PROSITE" id="PS00189">
    <property type="entry name" value="LIPOYL"/>
    <property type="match status" value="1"/>
</dbReference>
<gene>
    <name evidence="1" type="primary">gcvH</name>
    <name type="ordered locus">TTHA0524</name>
</gene>
<feature type="chain" id="PRO_0000302458" description="Glycine cleavage system H protein">
    <location>
        <begin position="1"/>
        <end position="128"/>
    </location>
</feature>
<feature type="domain" description="Lipoyl-binding" evidence="2">
    <location>
        <begin position="22"/>
        <end position="104"/>
    </location>
</feature>
<feature type="modified residue" description="N6-lipoyllysine" evidence="1 3">
    <location>
        <position position="63"/>
    </location>
</feature>
<feature type="strand" evidence="4">
    <location>
        <begin position="5"/>
        <end position="9"/>
    </location>
</feature>
<feature type="strand" evidence="4">
    <location>
        <begin position="13"/>
        <end position="19"/>
    </location>
</feature>
<feature type="strand" evidence="4">
    <location>
        <begin position="22"/>
        <end position="27"/>
    </location>
</feature>
<feature type="helix" evidence="4">
    <location>
        <begin position="29"/>
        <end position="35"/>
    </location>
</feature>
<feature type="strand" evidence="4">
    <location>
        <begin position="37"/>
        <end position="42"/>
    </location>
</feature>
<feature type="strand" evidence="4">
    <location>
        <begin position="55"/>
        <end position="69"/>
    </location>
</feature>
<feature type="strand" evidence="4">
    <location>
        <begin position="71"/>
        <end position="79"/>
    </location>
</feature>
<feature type="helix" evidence="4">
    <location>
        <begin position="82"/>
        <end position="85"/>
    </location>
</feature>
<feature type="helix" evidence="4">
    <location>
        <begin position="89"/>
        <end position="92"/>
    </location>
</feature>
<feature type="turn" evidence="4">
    <location>
        <begin position="94"/>
        <end position="98"/>
    </location>
</feature>
<feature type="strand" evidence="4">
    <location>
        <begin position="101"/>
        <end position="106"/>
    </location>
</feature>
<feature type="helix" evidence="4">
    <location>
        <begin position="108"/>
        <end position="113"/>
    </location>
</feature>
<feature type="helix" evidence="4">
    <location>
        <begin position="117"/>
        <end position="126"/>
    </location>
</feature>
<reference key="1">
    <citation type="submission" date="2004-11" db="EMBL/GenBank/DDBJ databases">
        <title>Complete genome sequence of Thermus thermophilus HB8.</title>
        <authorList>
            <person name="Masui R."/>
            <person name="Kurokawa K."/>
            <person name="Nakagawa N."/>
            <person name="Tokunaga F."/>
            <person name="Koyama Y."/>
            <person name="Shibata T."/>
            <person name="Oshima T."/>
            <person name="Yokoyama S."/>
            <person name="Yasunaga T."/>
            <person name="Kuramitsu S."/>
        </authorList>
    </citation>
    <scope>NUCLEOTIDE SEQUENCE [LARGE SCALE GENOMIC DNA]</scope>
    <source>
        <strain>ATCC 27634 / DSM 579 / HB8</strain>
    </source>
</reference>
<reference key="2">
    <citation type="journal article" date="2003" name="Acta Crystallogr. D">
        <title>Structure of Thermus thermophilus HB8 H-protein of the glycine-cleavage system, resolved by a six-dimensional molecular-replacement method.</title>
        <authorList>
            <person name="Nakai T."/>
            <person name="Ishijima J."/>
            <person name="Masui R."/>
            <person name="Kuramitsu S."/>
            <person name="Kamiya N."/>
        </authorList>
    </citation>
    <scope>X-RAY CRYSTALLOGRAPHY (2.5 ANGSTROMS)</scope>
    <scope>COFACTOR</scope>
    <scope>MASS SPECTROMETRY</scope>
    <scope>SUBUNIT</scope>
    <scope>LIPOYLATION AT LYS-63</scope>
</reference>
<sequence length="128" mass="14083">MDIPKDRFYTKTHEWALPEGDTVLVGITDYAQDALGDVVYVELPEVGRVVEKGEAVAVVESVKTASDIYAPVAGEIVEVNLALEKTPELVNQDPYGEGWIFRLKPRDMGDLDELLDAGGYQEVLESEA</sequence>
<proteinExistence type="evidence at protein level"/>
<organism>
    <name type="scientific">Thermus thermophilus (strain ATCC 27634 / DSM 579 / HB8)</name>
    <dbReference type="NCBI Taxonomy" id="300852"/>
    <lineage>
        <taxon>Bacteria</taxon>
        <taxon>Thermotogati</taxon>
        <taxon>Deinococcota</taxon>
        <taxon>Deinococci</taxon>
        <taxon>Thermales</taxon>
        <taxon>Thermaceae</taxon>
        <taxon>Thermus</taxon>
    </lineage>
</organism>
<name>GCSH_THET8</name>
<keyword id="KW-0002">3D-structure</keyword>
<keyword id="KW-0450">Lipoyl</keyword>
<keyword id="KW-1185">Reference proteome</keyword>